<gene>
    <name evidence="1" type="primary">sucC</name>
    <name type="ordered locus">MTH_1036</name>
</gene>
<feature type="chain" id="PRO_0000102886" description="Succinate--CoA ligase [ADP-forming] subunit beta">
    <location>
        <begin position="1"/>
        <end position="365"/>
    </location>
</feature>
<feature type="domain" description="ATP-grasp" evidence="1">
    <location>
        <begin position="9"/>
        <end position="230"/>
    </location>
</feature>
<feature type="binding site" evidence="1">
    <location>
        <position position="45"/>
    </location>
    <ligand>
        <name>ATP</name>
        <dbReference type="ChEBI" id="CHEBI:30616"/>
    </ligand>
</feature>
<feature type="binding site" evidence="1">
    <location>
        <begin position="52"/>
        <end position="54"/>
    </location>
    <ligand>
        <name>ATP</name>
        <dbReference type="ChEBI" id="CHEBI:30616"/>
    </ligand>
</feature>
<feature type="binding site" evidence="1">
    <location>
        <position position="90"/>
    </location>
    <ligand>
        <name>ATP</name>
        <dbReference type="ChEBI" id="CHEBI:30616"/>
    </ligand>
</feature>
<feature type="binding site" evidence="1">
    <location>
        <position position="93"/>
    </location>
    <ligand>
        <name>ATP</name>
        <dbReference type="ChEBI" id="CHEBI:30616"/>
    </ligand>
</feature>
<feature type="binding site" evidence="1">
    <location>
        <position position="98"/>
    </location>
    <ligand>
        <name>ATP</name>
        <dbReference type="ChEBI" id="CHEBI:30616"/>
    </ligand>
</feature>
<feature type="binding site" evidence="1">
    <location>
        <position position="190"/>
    </location>
    <ligand>
        <name>Mg(2+)</name>
        <dbReference type="ChEBI" id="CHEBI:18420"/>
    </ligand>
</feature>
<feature type="binding site" evidence="1">
    <location>
        <position position="203"/>
    </location>
    <ligand>
        <name>Mg(2+)</name>
        <dbReference type="ChEBI" id="CHEBI:18420"/>
    </ligand>
</feature>
<feature type="binding site" evidence="1">
    <location>
        <position position="244"/>
    </location>
    <ligand>
        <name>substrate</name>
        <note>ligand shared with subunit alpha</note>
    </ligand>
</feature>
<feature type="binding site" evidence="1">
    <location>
        <begin position="300"/>
        <end position="302"/>
    </location>
    <ligand>
        <name>substrate</name>
        <note>ligand shared with subunit alpha</note>
    </ligand>
</feature>
<evidence type="ECO:0000255" key="1">
    <source>
        <dbReference type="HAMAP-Rule" id="MF_00558"/>
    </source>
</evidence>
<reference key="1">
    <citation type="journal article" date="1997" name="J. Bacteriol.">
        <title>Complete genome sequence of Methanobacterium thermoautotrophicum deltaH: functional analysis and comparative genomics.</title>
        <authorList>
            <person name="Smith D.R."/>
            <person name="Doucette-Stamm L.A."/>
            <person name="Deloughery C."/>
            <person name="Lee H.-M."/>
            <person name="Dubois J."/>
            <person name="Aldredge T."/>
            <person name="Bashirzadeh R."/>
            <person name="Blakely D."/>
            <person name="Cook R."/>
            <person name="Gilbert K."/>
            <person name="Harrison D."/>
            <person name="Hoang L."/>
            <person name="Keagle P."/>
            <person name="Lumm W."/>
            <person name="Pothier B."/>
            <person name="Qiu D."/>
            <person name="Spadafora R."/>
            <person name="Vicare R."/>
            <person name="Wang Y."/>
            <person name="Wierzbowski J."/>
            <person name="Gibson R."/>
            <person name="Jiwani N."/>
            <person name="Caruso A."/>
            <person name="Bush D."/>
            <person name="Safer H."/>
            <person name="Patwell D."/>
            <person name="Prabhakar S."/>
            <person name="McDougall S."/>
            <person name="Shimer G."/>
            <person name="Goyal A."/>
            <person name="Pietrovski S."/>
            <person name="Church G.M."/>
            <person name="Daniels C.J."/>
            <person name="Mao J.-I."/>
            <person name="Rice P."/>
            <person name="Noelling J."/>
            <person name="Reeve J.N."/>
        </authorList>
    </citation>
    <scope>NUCLEOTIDE SEQUENCE [LARGE SCALE GENOMIC DNA]</scope>
    <source>
        <strain>ATCC 29096 / DSM 1053 / JCM 10044 / NBRC 100330 / Delta H</strain>
    </source>
</reference>
<comment type="function">
    <text evidence="1">Succinyl-CoA synthetase functions in the citric acid cycle (TCA), coupling the hydrolysis of succinyl-CoA to the synthesis of either ATP or GTP and thus represents the only step of substrate-level phosphorylation in the TCA. The beta subunit provides nucleotide specificity of the enzyme and binds the substrate succinate, while the binding sites for coenzyme A and phosphate are found in the alpha subunit.</text>
</comment>
<comment type="catalytic activity">
    <reaction evidence="1">
        <text>succinate + ATP + CoA = succinyl-CoA + ADP + phosphate</text>
        <dbReference type="Rhea" id="RHEA:17661"/>
        <dbReference type="ChEBI" id="CHEBI:30031"/>
        <dbReference type="ChEBI" id="CHEBI:30616"/>
        <dbReference type="ChEBI" id="CHEBI:43474"/>
        <dbReference type="ChEBI" id="CHEBI:57287"/>
        <dbReference type="ChEBI" id="CHEBI:57292"/>
        <dbReference type="ChEBI" id="CHEBI:456216"/>
        <dbReference type="EC" id="6.2.1.5"/>
    </reaction>
    <physiologicalReaction direction="right-to-left" evidence="1">
        <dbReference type="Rhea" id="RHEA:17663"/>
    </physiologicalReaction>
</comment>
<comment type="catalytic activity">
    <reaction evidence="1">
        <text>GTP + succinate + CoA = succinyl-CoA + GDP + phosphate</text>
        <dbReference type="Rhea" id="RHEA:22120"/>
        <dbReference type="ChEBI" id="CHEBI:30031"/>
        <dbReference type="ChEBI" id="CHEBI:37565"/>
        <dbReference type="ChEBI" id="CHEBI:43474"/>
        <dbReference type="ChEBI" id="CHEBI:57287"/>
        <dbReference type="ChEBI" id="CHEBI:57292"/>
        <dbReference type="ChEBI" id="CHEBI:58189"/>
    </reaction>
    <physiologicalReaction direction="right-to-left" evidence="1">
        <dbReference type="Rhea" id="RHEA:22122"/>
    </physiologicalReaction>
</comment>
<comment type="cofactor">
    <cofactor evidence="1">
        <name>Mg(2+)</name>
        <dbReference type="ChEBI" id="CHEBI:18420"/>
    </cofactor>
    <text evidence="1">Binds 1 Mg(2+) ion per subunit.</text>
</comment>
<comment type="pathway">
    <text evidence="1">Carbohydrate metabolism; tricarboxylic acid cycle; succinate from succinyl-CoA (ligase route): step 1/1.</text>
</comment>
<comment type="subunit">
    <text evidence="1">Heterotetramer of two alpha and two beta subunits.</text>
</comment>
<comment type="similarity">
    <text evidence="1">Belongs to the succinate/malate CoA ligase beta subunit family.</text>
</comment>
<name>SUCC_METTH</name>
<sequence>MKFYEYSAKEIFRAEGISTPRGGVAETPEEAERIAAELGCDVAVKSQVLTGGRGKAGGIRFASPSGVAEVTGDLLSSEVRGETVEKVLIEEKIPIDRELYVSAVIDRTAKMPLIMASAEGGVDIEELAARSPEKIVRYHINPLDEFLPYEAREIARKMGLESELIPSVGGVIWKLYQLFRKYDARLAEINPLVISGDSVIAADAKLEVDDDSIYRHREFMEMEEYEPEEFAFVKLDGDIAVIGNGAGLTLTAMDLIKLNGEPATFLDIGGGASEDVIRRALDLVISHPSVRVVFLNVLGGITRADDVARGVVNALRDARRDVPLVIRLTGTNEEEGQRILREAGIPFETSLERAAEKAVEIAKNL</sequence>
<keyword id="KW-0067">ATP-binding</keyword>
<keyword id="KW-0436">Ligase</keyword>
<keyword id="KW-0460">Magnesium</keyword>
<keyword id="KW-0479">Metal-binding</keyword>
<keyword id="KW-0547">Nucleotide-binding</keyword>
<keyword id="KW-1185">Reference proteome</keyword>
<keyword id="KW-0816">Tricarboxylic acid cycle</keyword>
<proteinExistence type="inferred from homology"/>
<protein>
    <recommendedName>
        <fullName evidence="1">Succinate--CoA ligase [ADP-forming] subunit beta</fullName>
        <ecNumber evidence="1">6.2.1.5</ecNumber>
    </recommendedName>
    <alternativeName>
        <fullName evidence="1">Succinyl-CoA synthetase subunit beta</fullName>
        <shortName evidence="1">SCS-beta</shortName>
    </alternativeName>
</protein>
<organism>
    <name type="scientific">Methanothermobacter thermautotrophicus (strain ATCC 29096 / DSM 1053 / JCM 10044 / NBRC 100330 / Delta H)</name>
    <name type="common">Methanobacterium thermoautotrophicum</name>
    <dbReference type="NCBI Taxonomy" id="187420"/>
    <lineage>
        <taxon>Archaea</taxon>
        <taxon>Methanobacteriati</taxon>
        <taxon>Methanobacteriota</taxon>
        <taxon>Methanomada group</taxon>
        <taxon>Methanobacteria</taxon>
        <taxon>Methanobacteriales</taxon>
        <taxon>Methanobacteriaceae</taxon>
        <taxon>Methanothermobacter</taxon>
    </lineage>
</organism>
<dbReference type="EC" id="6.2.1.5" evidence="1"/>
<dbReference type="EMBL" id="AE000666">
    <property type="protein sequence ID" value="AAB85532.1"/>
    <property type="molecule type" value="Genomic_DNA"/>
</dbReference>
<dbReference type="PIR" id="C69005">
    <property type="entry name" value="C69005"/>
</dbReference>
<dbReference type="RefSeq" id="WP_010876667.1">
    <property type="nucleotide sequence ID" value="NC_000916.1"/>
</dbReference>
<dbReference type="SMR" id="O27115"/>
<dbReference type="FunCoup" id="O27115">
    <property type="interactions" value="194"/>
</dbReference>
<dbReference type="STRING" id="187420.MTH_1036"/>
<dbReference type="PaxDb" id="187420-MTH_1036"/>
<dbReference type="EnsemblBacteria" id="AAB85532">
    <property type="protein sequence ID" value="AAB85532"/>
    <property type="gene ID" value="MTH_1036"/>
</dbReference>
<dbReference type="GeneID" id="1471444"/>
<dbReference type="KEGG" id="mth:MTH_1036"/>
<dbReference type="PATRIC" id="fig|187420.15.peg.1019"/>
<dbReference type="HOGENOM" id="CLU_037430_0_2_2"/>
<dbReference type="InParanoid" id="O27115"/>
<dbReference type="UniPathway" id="UPA00223">
    <property type="reaction ID" value="UER00999"/>
</dbReference>
<dbReference type="Proteomes" id="UP000005223">
    <property type="component" value="Chromosome"/>
</dbReference>
<dbReference type="GO" id="GO:0042709">
    <property type="term" value="C:succinate-CoA ligase complex"/>
    <property type="evidence" value="ECO:0007669"/>
    <property type="project" value="TreeGrafter"/>
</dbReference>
<dbReference type="GO" id="GO:0005524">
    <property type="term" value="F:ATP binding"/>
    <property type="evidence" value="ECO:0007669"/>
    <property type="project" value="UniProtKB-UniRule"/>
</dbReference>
<dbReference type="GO" id="GO:0000287">
    <property type="term" value="F:magnesium ion binding"/>
    <property type="evidence" value="ECO:0007669"/>
    <property type="project" value="UniProtKB-UniRule"/>
</dbReference>
<dbReference type="GO" id="GO:0004775">
    <property type="term" value="F:succinate-CoA ligase (ADP-forming) activity"/>
    <property type="evidence" value="ECO:0007669"/>
    <property type="project" value="UniProtKB-UniRule"/>
</dbReference>
<dbReference type="GO" id="GO:0004776">
    <property type="term" value="F:succinate-CoA ligase (GDP-forming) activity"/>
    <property type="evidence" value="ECO:0007669"/>
    <property type="project" value="RHEA"/>
</dbReference>
<dbReference type="GO" id="GO:0006104">
    <property type="term" value="P:succinyl-CoA metabolic process"/>
    <property type="evidence" value="ECO:0007669"/>
    <property type="project" value="TreeGrafter"/>
</dbReference>
<dbReference type="GO" id="GO:0006099">
    <property type="term" value="P:tricarboxylic acid cycle"/>
    <property type="evidence" value="ECO:0007669"/>
    <property type="project" value="UniProtKB-UniRule"/>
</dbReference>
<dbReference type="FunFam" id="3.30.470.20:FF:000002">
    <property type="entry name" value="Succinate--CoA ligase [ADP-forming] subunit beta"/>
    <property type="match status" value="1"/>
</dbReference>
<dbReference type="Gene3D" id="3.30.1490.20">
    <property type="entry name" value="ATP-grasp fold, A domain"/>
    <property type="match status" value="1"/>
</dbReference>
<dbReference type="Gene3D" id="3.30.470.20">
    <property type="entry name" value="ATP-grasp fold, B domain"/>
    <property type="match status" value="1"/>
</dbReference>
<dbReference type="Gene3D" id="3.40.50.261">
    <property type="entry name" value="Succinyl-CoA synthetase domains"/>
    <property type="match status" value="1"/>
</dbReference>
<dbReference type="HAMAP" id="MF_00558">
    <property type="entry name" value="Succ_CoA_beta"/>
    <property type="match status" value="1"/>
</dbReference>
<dbReference type="InterPro" id="IPR011761">
    <property type="entry name" value="ATP-grasp"/>
</dbReference>
<dbReference type="InterPro" id="IPR013650">
    <property type="entry name" value="ATP-grasp_succ-CoA_synth-type"/>
</dbReference>
<dbReference type="InterPro" id="IPR013815">
    <property type="entry name" value="ATP_grasp_subdomain_1"/>
</dbReference>
<dbReference type="InterPro" id="IPR017866">
    <property type="entry name" value="Succ-CoA_synthase_bsu_CS"/>
</dbReference>
<dbReference type="InterPro" id="IPR005811">
    <property type="entry name" value="SUCC_ACL_C"/>
</dbReference>
<dbReference type="InterPro" id="IPR005809">
    <property type="entry name" value="Succ_CoA_ligase-like_bsu"/>
</dbReference>
<dbReference type="InterPro" id="IPR016102">
    <property type="entry name" value="Succinyl-CoA_synth-like"/>
</dbReference>
<dbReference type="NCBIfam" id="NF001913">
    <property type="entry name" value="PRK00696.1"/>
    <property type="match status" value="1"/>
</dbReference>
<dbReference type="NCBIfam" id="TIGR01016">
    <property type="entry name" value="sucCoAbeta"/>
    <property type="match status" value="1"/>
</dbReference>
<dbReference type="PANTHER" id="PTHR11815:SF10">
    <property type="entry name" value="SUCCINATE--COA LIGASE [GDP-FORMING] SUBUNIT BETA, MITOCHONDRIAL"/>
    <property type="match status" value="1"/>
</dbReference>
<dbReference type="PANTHER" id="PTHR11815">
    <property type="entry name" value="SUCCINYL-COA SYNTHETASE BETA CHAIN"/>
    <property type="match status" value="1"/>
</dbReference>
<dbReference type="Pfam" id="PF08442">
    <property type="entry name" value="ATP-grasp_2"/>
    <property type="match status" value="1"/>
</dbReference>
<dbReference type="Pfam" id="PF00549">
    <property type="entry name" value="Ligase_CoA"/>
    <property type="match status" value="1"/>
</dbReference>
<dbReference type="PIRSF" id="PIRSF001554">
    <property type="entry name" value="SucCS_beta"/>
    <property type="match status" value="1"/>
</dbReference>
<dbReference type="SUPFAM" id="SSF56059">
    <property type="entry name" value="Glutathione synthetase ATP-binding domain-like"/>
    <property type="match status" value="1"/>
</dbReference>
<dbReference type="SUPFAM" id="SSF52210">
    <property type="entry name" value="Succinyl-CoA synthetase domains"/>
    <property type="match status" value="1"/>
</dbReference>
<dbReference type="PROSITE" id="PS50975">
    <property type="entry name" value="ATP_GRASP"/>
    <property type="match status" value="1"/>
</dbReference>
<dbReference type="PROSITE" id="PS01217">
    <property type="entry name" value="SUCCINYL_COA_LIG_3"/>
    <property type="match status" value="1"/>
</dbReference>
<accession>O27115</accession>